<comment type="subcellular location">
    <subcellularLocation>
        <location evidence="1">Cellular thylakoid membrane</location>
        <topology evidence="1">Peripheral membrane protein</topology>
        <orientation evidence="1">Cytoplasmic side</orientation>
    </subcellularLocation>
</comment>
<evidence type="ECO:0000305" key="1">
    <source>
    </source>
</evidence>
<name>Y1697_SYNY3</name>
<dbReference type="EMBL" id="BA000022">
    <property type="protein sequence ID" value="BAA17742.1"/>
    <property type="molecule type" value="Genomic_DNA"/>
</dbReference>
<dbReference type="PIR" id="S77184">
    <property type="entry name" value="S77184"/>
</dbReference>
<dbReference type="SMR" id="P73695"/>
<dbReference type="STRING" id="1148.gene:10498609"/>
<dbReference type="PaxDb" id="1148-1652823"/>
<dbReference type="EnsemblBacteria" id="BAA17742">
    <property type="protein sequence ID" value="BAA17742"/>
    <property type="gene ID" value="BAA17742"/>
</dbReference>
<dbReference type="KEGG" id="syn:sll1697"/>
<dbReference type="eggNOG" id="COG2006">
    <property type="taxonomic scope" value="Bacteria"/>
</dbReference>
<dbReference type="InParanoid" id="P73695"/>
<dbReference type="PhylomeDB" id="P73695"/>
<dbReference type="Proteomes" id="UP000001425">
    <property type="component" value="Chromosome"/>
</dbReference>
<dbReference type="GO" id="GO:0031676">
    <property type="term" value="C:plasma membrane-derived thylakoid membrane"/>
    <property type="evidence" value="ECO:0007669"/>
    <property type="project" value="UniProtKB-SubCell"/>
</dbReference>
<dbReference type="InterPro" id="IPR007160">
    <property type="entry name" value="DUF362"/>
</dbReference>
<dbReference type="Pfam" id="PF04015">
    <property type="entry name" value="DUF362"/>
    <property type="match status" value="1"/>
</dbReference>
<sequence>MVKSVSLLRSQSYEAGSLLASLRTLLEPLGGMGNFVKPGDRVLLKPNLLTGNRPGRECITRPEVVAAVAQLVQEAGGKPFMGDSPAFGSARGVAENNGYLPLLQALDIPIVEFRGGRYATDSDSFNHLRLSKEAMDADVVINLPKLKSHAQLTMTMGVKNLFGCVPGKMKAWWHMEAGKDANRFGEMLVETAKAIAPDLSILDGIMAHEGNGPMHGDPREVGLLAASPDVFALDFVITDILQLDPATIPTMAAQERLGLNPTAAELTFPLSHPRELVVDNWKLPEVLMPIDFGLPRVLRSTFKHFYIRFVKEPLHIYTGKA</sequence>
<gene>
    <name type="ordered locus">sll1697</name>
</gene>
<feature type="chain" id="PRO_0000352740" description="Thylakoid-associated protein sll1697">
    <location>
        <begin position="1"/>
        <end position="321"/>
    </location>
</feature>
<reference key="1">
    <citation type="journal article" date="1996" name="DNA Res.">
        <title>Sequence analysis of the genome of the unicellular cyanobacterium Synechocystis sp. strain PCC6803. II. Sequence determination of the entire genome and assignment of potential protein-coding regions.</title>
        <authorList>
            <person name="Kaneko T."/>
            <person name="Sato S."/>
            <person name="Kotani H."/>
            <person name="Tanaka A."/>
            <person name="Asamizu E."/>
            <person name="Nakamura Y."/>
            <person name="Miyajima N."/>
            <person name="Hirosawa M."/>
            <person name="Sugiura M."/>
            <person name="Sasamoto S."/>
            <person name="Kimura T."/>
            <person name="Hosouchi T."/>
            <person name="Matsuno A."/>
            <person name="Muraki A."/>
            <person name="Nakazaki N."/>
            <person name="Naruo K."/>
            <person name="Okumura S."/>
            <person name="Shimpo S."/>
            <person name="Takeuchi C."/>
            <person name="Wada T."/>
            <person name="Watanabe A."/>
            <person name="Yamada M."/>
            <person name="Yasuda M."/>
            <person name="Tabata S."/>
        </authorList>
    </citation>
    <scope>NUCLEOTIDE SEQUENCE [LARGE SCALE GENOMIC DNA]</scope>
    <source>
        <strain>ATCC 27184 / PCC 6803 / Kazusa</strain>
    </source>
</reference>
<reference key="2">
    <citation type="journal article" date="2005" name="Proteomics">
        <title>Proteomic studies of the thylakoid membrane of Synechocystis sp. PCC 6803.</title>
        <authorList>
            <person name="Srivastava R."/>
            <person name="Pisareva T."/>
            <person name="Norling B."/>
        </authorList>
    </citation>
    <scope>SUBCELLULAR LOCATION IN THYLAKOID</scope>
</reference>
<accession>P73695</accession>
<proteinExistence type="predicted"/>
<keyword id="KW-0472">Membrane</keyword>
<keyword id="KW-1185">Reference proteome</keyword>
<keyword id="KW-0793">Thylakoid</keyword>
<organism>
    <name type="scientific">Synechocystis sp. (strain ATCC 27184 / PCC 6803 / Kazusa)</name>
    <dbReference type="NCBI Taxonomy" id="1111708"/>
    <lineage>
        <taxon>Bacteria</taxon>
        <taxon>Bacillati</taxon>
        <taxon>Cyanobacteriota</taxon>
        <taxon>Cyanophyceae</taxon>
        <taxon>Synechococcales</taxon>
        <taxon>Merismopediaceae</taxon>
        <taxon>Synechocystis</taxon>
    </lineage>
</organism>
<protein>
    <recommendedName>
        <fullName>Thylakoid-associated protein sll1697</fullName>
    </recommendedName>
</protein>